<protein>
    <recommendedName>
        <fullName evidence="1">8-amino-7-oxononanoate synthase</fullName>
        <shortName evidence="1">AONS</shortName>
        <ecNumber evidence="1">2.3.1.47</ecNumber>
    </recommendedName>
    <alternativeName>
        <fullName evidence="1">7-keto-8-amino-pelargonic acid synthase</fullName>
        <shortName evidence="1">7-KAP synthase</shortName>
        <shortName evidence="1">KAPA synthase</shortName>
    </alternativeName>
    <alternativeName>
        <fullName evidence="1">8-amino-7-ketopelargonate synthase</fullName>
    </alternativeName>
</protein>
<accession>A1TTV0</accession>
<reference key="1">
    <citation type="submission" date="2006-12" db="EMBL/GenBank/DDBJ databases">
        <title>Complete sequence of Acidovorax avenae subsp. citrulli AAC00-1.</title>
        <authorList>
            <person name="Copeland A."/>
            <person name="Lucas S."/>
            <person name="Lapidus A."/>
            <person name="Barry K."/>
            <person name="Detter J.C."/>
            <person name="Glavina del Rio T."/>
            <person name="Dalin E."/>
            <person name="Tice H."/>
            <person name="Pitluck S."/>
            <person name="Kiss H."/>
            <person name="Brettin T."/>
            <person name="Bruce D."/>
            <person name="Han C."/>
            <person name="Tapia R."/>
            <person name="Gilna P."/>
            <person name="Schmutz J."/>
            <person name="Larimer F."/>
            <person name="Land M."/>
            <person name="Hauser L."/>
            <person name="Kyrpides N."/>
            <person name="Kim E."/>
            <person name="Stahl D."/>
            <person name="Richardson P."/>
        </authorList>
    </citation>
    <scope>NUCLEOTIDE SEQUENCE [LARGE SCALE GENOMIC DNA]</scope>
    <source>
        <strain>AAC00-1</strain>
    </source>
</reference>
<dbReference type="EC" id="2.3.1.47" evidence="1"/>
<dbReference type="EMBL" id="CP000512">
    <property type="protein sequence ID" value="ABM34388.1"/>
    <property type="molecule type" value="Genomic_DNA"/>
</dbReference>
<dbReference type="RefSeq" id="WP_011796875.1">
    <property type="nucleotide sequence ID" value="NC_008752.1"/>
</dbReference>
<dbReference type="SMR" id="A1TTV0"/>
<dbReference type="STRING" id="397945.Aave_3843"/>
<dbReference type="KEGG" id="aav:Aave_3843"/>
<dbReference type="eggNOG" id="COG0156">
    <property type="taxonomic scope" value="Bacteria"/>
</dbReference>
<dbReference type="HOGENOM" id="CLU_015846_11_2_4"/>
<dbReference type="OrthoDB" id="9807157at2"/>
<dbReference type="UniPathway" id="UPA00078"/>
<dbReference type="Proteomes" id="UP000002596">
    <property type="component" value="Chromosome"/>
</dbReference>
<dbReference type="GO" id="GO:0008710">
    <property type="term" value="F:8-amino-7-oxononanoate synthase activity"/>
    <property type="evidence" value="ECO:0007669"/>
    <property type="project" value="UniProtKB-UniRule"/>
</dbReference>
<dbReference type="GO" id="GO:0030170">
    <property type="term" value="F:pyridoxal phosphate binding"/>
    <property type="evidence" value="ECO:0007669"/>
    <property type="project" value="UniProtKB-UniRule"/>
</dbReference>
<dbReference type="GO" id="GO:0009102">
    <property type="term" value="P:biotin biosynthetic process"/>
    <property type="evidence" value="ECO:0007669"/>
    <property type="project" value="UniProtKB-UniRule"/>
</dbReference>
<dbReference type="Gene3D" id="3.90.1150.10">
    <property type="entry name" value="Aspartate Aminotransferase, domain 1"/>
    <property type="match status" value="1"/>
</dbReference>
<dbReference type="Gene3D" id="3.40.640.10">
    <property type="entry name" value="Type I PLP-dependent aspartate aminotransferase-like (Major domain)"/>
    <property type="match status" value="1"/>
</dbReference>
<dbReference type="HAMAP" id="MF_01693">
    <property type="entry name" value="BioF_aminotrans_2"/>
    <property type="match status" value="1"/>
</dbReference>
<dbReference type="InterPro" id="IPR004839">
    <property type="entry name" value="Aminotransferase_I/II_large"/>
</dbReference>
<dbReference type="InterPro" id="IPR050087">
    <property type="entry name" value="AON_synthase_class-II"/>
</dbReference>
<dbReference type="InterPro" id="IPR004723">
    <property type="entry name" value="AONS_Archaea/Proteobacteria"/>
</dbReference>
<dbReference type="InterPro" id="IPR022834">
    <property type="entry name" value="AONS_Proteobacteria"/>
</dbReference>
<dbReference type="InterPro" id="IPR015424">
    <property type="entry name" value="PyrdxlP-dep_Trfase"/>
</dbReference>
<dbReference type="InterPro" id="IPR015421">
    <property type="entry name" value="PyrdxlP-dep_Trfase_major"/>
</dbReference>
<dbReference type="InterPro" id="IPR015422">
    <property type="entry name" value="PyrdxlP-dep_Trfase_small"/>
</dbReference>
<dbReference type="NCBIfam" id="TIGR00858">
    <property type="entry name" value="bioF"/>
    <property type="match status" value="1"/>
</dbReference>
<dbReference type="PANTHER" id="PTHR13693:SF100">
    <property type="entry name" value="8-AMINO-7-OXONONANOATE SYNTHASE"/>
    <property type="match status" value="1"/>
</dbReference>
<dbReference type="PANTHER" id="PTHR13693">
    <property type="entry name" value="CLASS II AMINOTRANSFERASE/8-AMINO-7-OXONONANOATE SYNTHASE"/>
    <property type="match status" value="1"/>
</dbReference>
<dbReference type="Pfam" id="PF00155">
    <property type="entry name" value="Aminotran_1_2"/>
    <property type="match status" value="1"/>
</dbReference>
<dbReference type="SUPFAM" id="SSF53383">
    <property type="entry name" value="PLP-dependent transferases"/>
    <property type="match status" value="1"/>
</dbReference>
<comment type="function">
    <text evidence="1">Catalyzes the decarboxylative condensation of pimeloyl-[acyl-carrier protein] and L-alanine to produce 8-amino-7-oxononanoate (AON), [acyl-carrier protein], and carbon dioxide.</text>
</comment>
<comment type="catalytic activity">
    <reaction evidence="1">
        <text>6-carboxyhexanoyl-[ACP] + L-alanine + H(+) = (8S)-8-amino-7-oxononanoate + holo-[ACP] + CO2</text>
        <dbReference type="Rhea" id="RHEA:42288"/>
        <dbReference type="Rhea" id="RHEA-COMP:9685"/>
        <dbReference type="Rhea" id="RHEA-COMP:9955"/>
        <dbReference type="ChEBI" id="CHEBI:15378"/>
        <dbReference type="ChEBI" id="CHEBI:16526"/>
        <dbReference type="ChEBI" id="CHEBI:57972"/>
        <dbReference type="ChEBI" id="CHEBI:64479"/>
        <dbReference type="ChEBI" id="CHEBI:78846"/>
        <dbReference type="ChEBI" id="CHEBI:149468"/>
        <dbReference type="EC" id="2.3.1.47"/>
    </reaction>
</comment>
<comment type="cofactor">
    <cofactor evidence="1">
        <name>pyridoxal 5'-phosphate</name>
        <dbReference type="ChEBI" id="CHEBI:597326"/>
    </cofactor>
</comment>
<comment type="pathway">
    <text evidence="1">Cofactor biosynthesis; biotin biosynthesis.</text>
</comment>
<comment type="subunit">
    <text evidence="1">Homodimer.</text>
</comment>
<comment type="similarity">
    <text evidence="1">Belongs to the class-II pyridoxal-phosphate-dependent aminotransferase family. BioF subfamily.</text>
</comment>
<keyword id="KW-0093">Biotin biosynthesis</keyword>
<keyword id="KW-0663">Pyridoxal phosphate</keyword>
<keyword id="KW-0808">Transferase</keyword>
<name>BIOF_PARC0</name>
<evidence type="ECO:0000255" key="1">
    <source>
        <dbReference type="HAMAP-Rule" id="MF_01693"/>
    </source>
</evidence>
<gene>
    <name evidence="1" type="primary">bioF</name>
    <name type="ordered locus">Aave_3843</name>
</gene>
<organism>
    <name type="scientific">Paracidovorax citrulli (strain AAC00-1)</name>
    <name type="common">Acidovorax citrulli</name>
    <dbReference type="NCBI Taxonomy" id="397945"/>
    <lineage>
        <taxon>Bacteria</taxon>
        <taxon>Pseudomonadati</taxon>
        <taxon>Pseudomonadota</taxon>
        <taxon>Betaproteobacteria</taxon>
        <taxon>Burkholderiales</taxon>
        <taxon>Comamonadaceae</taxon>
        <taxon>Paracidovorax</taxon>
    </lineage>
</organism>
<sequence>MTTFPFAPSWLDELPARLAELDAVHLRRRRRTVRPLQGAHLDVDGQPMLAFCSNDYLGLAGHPALADAACAGAREFGVGSGGSPLVSGHSQANAALEADLARFVQLPRALYFYAGYATNTGIVPALVGAGDALFSDALNHACLIDGARLSRATIHRYPHGDLAALEALLAASPARRKLVVSDAVFSMDGDVADIRTLHALCERHDALLLLDDAHGFGVLGPQGRGALAEAGLTGQRASQRVLYMATLGKAAGAAGAFVAGSEVLIEWLLQKTRSYIFATAAPALLARTLQASLGLIERGDALRAHLDARIAQLRAGLVPVLQGTHWELGTSRTAVQALVIGANDEALAAMEALRARGLWVPAIRPPTVPEGTARLRIALSAAHTEADVARLVDALADIAPTARSALPQEAAA</sequence>
<proteinExistence type="inferred from homology"/>
<feature type="chain" id="PRO_0000380883" description="8-amino-7-oxononanoate synthase">
    <location>
        <begin position="1"/>
        <end position="412"/>
    </location>
</feature>
<feature type="binding site" evidence="1">
    <location>
        <position position="28"/>
    </location>
    <ligand>
        <name>substrate</name>
    </ligand>
</feature>
<feature type="binding site" evidence="1">
    <location>
        <begin position="115"/>
        <end position="116"/>
    </location>
    <ligand>
        <name>pyridoxal 5'-phosphate</name>
        <dbReference type="ChEBI" id="CHEBI:597326"/>
    </ligand>
</feature>
<feature type="binding site" evidence="1">
    <location>
        <position position="140"/>
    </location>
    <ligand>
        <name>substrate</name>
    </ligand>
</feature>
<feature type="binding site" evidence="1">
    <location>
        <position position="186"/>
    </location>
    <ligand>
        <name>pyridoxal 5'-phosphate</name>
        <dbReference type="ChEBI" id="CHEBI:597326"/>
    </ligand>
</feature>
<feature type="binding site" evidence="1">
    <location>
        <position position="214"/>
    </location>
    <ligand>
        <name>pyridoxal 5'-phosphate</name>
        <dbReference type="ChEBI" id="CHEBI:597326"/>
    </ligand>
</feature>
<feature type="binding site" evidence="1">
    <location>
        <position position="246"/>
    </location>
    <ligand>
        <name>pyridoxal 5'-phosphate</name>
        <dbReference type="ChEBI" id="CHEBI:597326"/>
    </ligand>
</feature>
<feature type="binding site" evidence="1">
    <location>
        <position position="367"/>
    </location>
    <ligand>
        <name>substrate</name>
    </ligand>
</feature>
<feature type="modified residue" description="N6-(pyridoxal phosphate)lysine" evidence="1">
    <location>
        <position position="249"/>
    </location>
</feature>